<reference key="1">
    <citation type="journal article" date="2003" name="Nature">
        <title>The genome sequence of Bacillus anthracis Ames and comparison to closely related bacteria.</title>
        <authorList>
            <person name="Read T.D."/>
            <person name="Peterson S.N."/>
            <person name="Tourasse N.J."/>
            <person name="Baillie L.W."/>
            <person name="Paulsen I.T."/>
            <person name="Nelson K.E."/>
            <person name="Tettelin H."/>
            <person name="Fouts D.E."/>
            <person name="Eisen J.A."/>
            <person name="Gill S.R."/>
            <person name="Holtzapple E.K."/>
            <person name="Okstad O.A."/>
            <person name="Helgason E."/>
            <person name="Rilstone J."/>
            <person name="Wu M."/>
            <person name="Kolonay J.F."/>
            <person name="Beanan M.J."/>
            <person name="Dodson R.J."/>
            <person name="Brinkac L.M."/>
            <person name="Gwinn M.L."/>
            <person name="DeBoy R.T."/>
            <person name="Madpu R."/>
            <person name="Daugherty S.C."/>
            <person name="Durkin A.S."/>
            <person name="Haft D.H."/>
            <person name="Nelson W.C."/>
            <person name="Peterson J.D."/>
            <person name="Pop M."/>
            <person name="Khouri H.M."/>
            <person name="Radune D."/>
            <person name="Benton J.L."/>
            <person name="Mahamoud Y."/>
            <person name="Jiang L."/>
            <person name="Hance I.R."/>
            <person name="Weidman J.F."/>
            <person name="Berry K.J."/>
            <person name="Plaut R.D."/>
            <person name="Wolf A.M."/>
            <person name="Watkins K.L."/>
            <person name="Nierman W.C."/>
            <person name="Hazen A."/>
            <person name="Cline R.T."/>
            <person name="Redmond C."/>
            <person name="Thwaite J.E."/>
            <person name="White O."/>
            <person name="Salzberg S.L."/>
            <person name="Thomason B."/>
            <person name="Friedlander A.M."/>
            <person name="Koehler T.M."/>
            <person name="Hanna P.C."/>
            <person name="Kolstoe A.-B."/>
            <person name="Fraser C.M."/>
        </authorList>
    </citation>
    <scope>NUCLEOTIDE SEQUENCE [LARGE SCALE GENOMIC DNA]</scope>
    <source>
        <strain>Ames / isolate Porton</strain>
    </source>
</reference>
<reference key="2">
    <citation type="journal article" date="2009" name="J. Bacteriol.">
        <title>The complete genome sequence of Bacillus anthracis Ames 'Ancestor'.</title>
        <authorList>
            <person name="Ravel J."/>
            <person name="Jiang L."/>
            <person name="Stanley S.T."/>
            <person name="Wilson M.R."/>
            <person name="Decker R.S."/>
            <person name="Read T.D."/>
            <person name="Worsham P."/>
            <person name="Keim P.S."/>
            <person name="Salzberg S.L."/>
            <person name="Fraser-Liggett C.M."/>
            <person name="Rasko D.A."/>
        </authorList>
    </citation>
    <scope>NUCLEOTIDE SEQUENCE [LARGE SCALE GENOMIC DNA]</scope>
    <source>
        <strain>Ames ancestor</strain>
    </source>
</reference>
<reference key="3">
    <citation type="submission" date="2004-01" db="EMBL/GenBank/DDBJ databases">
        <title>Complete genome sequence of Bacillus anthracis Sterne.</title>
        <authorList>
            <person name="Brettin T.S."/>
            <person name="Bruce D."/>
            <person name="Challacombe J.F."/>
            <person name="Gilna P."/>
            <person name="Han C."/>
            <person name="Hill K."/>
            <person name="Hitchcock P."/>
            <person name="Jackson P."/>
            <person name="Keim P."/>
            <person name="Longmire J."/>
            <person name="Lucas S."/>
            <person name="Okinaka R."/>
            <person name="Richardson P."/>
            <person name="Rubin E."/>
            <person name="Tice H."/>
        </authorList>
    </citation>
    <scope>NUCLEOTIDE SEQUENCE [LARGE SCALE GENOMIC DNA]</scope>
    <source>
        <strain>Sterne</strain>
    </source>
</reference>
<dbReference type="EC" id="2.6.1.9"/>
<dbReference type="EMBL" id="AE016879">
    <property type="protein sequence ID" value="AAP25476.1"/>
    <property type="molecule type" value="Genomic_DNA"/>
</dbReference>
<dbReference type="EMBL" id="AE017334">
    <property type="protein sequence ID" value="AAT30637.1"/>
    <property type="molecule type" value="Genomic_DNA"/>
</dbReference>
<dbReference type="EMBL" id="AE017225">
    <property type="protein sequence ID" value="AAT53748.1"/>
    <property type="molecule type" value="Genomic_DNA"/>
</dbReference>
<dbReference type="RefSeq" id="NP_843990.1">
    <property type="nucleotide sequence ID" value="NC_003997.3"/>
</dbReference>
<dbReference type="RefSeq" id="YP_027697.1">
    <property type="nucleotide sequence ID" value="NC_005945.1"/>
</dbReference>
<dbReference type="SMR" id="Q81SV5"/>
<dbReference type="STRING" id="261594.GBAA_1539"/>
<dbReference type="DNASU" id="1087402"/>
<dbReference type="GeneID" id="45021513"/>
<dbReference type="KEGG" id="ban:BA_1539"/>
<dbReference type="KEGG" id="bar:GBAA_1539"/>
<dbReference type="KEGG" id="bat:BAS1428"/>
<dbReference type="PATRIC" id="fig|198094.11.peg.1511"/>
<dbReference type="eggNOG" id="COG0079">
    <property type="taxonomic scope" value="Bacteria"/>
</dbReference>
<dbReference type="HOGENOM" id="CLU_017584_3_3_9"/>
<dbReference type="OMA" id="NFVQFGR"/>
<dbReference type="OrthoDB" id="9813612at2"/>
<dbReference type="UniPathway" id="UPA00031">
    <property type="reaction ID" value="UER00012"/>
</dbReference>
<dbReference type="Proteomes" id="UP000000427">
    <property type="component" value="Chromosome"/>
</dbReference>
<dbReference type="Proteomes" id="UP000000594">
    <property type="component" value="Chromosome"/>
</dbReference>
<dbReference type="GO" id="GO:0004400">
    <property type="term" value="F:histidinol-phosphate transaminase activity"/>
    <property type="evidence" value="ECO:0007669"/>
    <property type="project" value="UniProtKB-UniRule"/>
</dbReference>
<dbReference type="GO" id="GO:0030170">
    <property type="term" value="F:pyridoxal phosphate binding"/>
    <property type="evidence" value="ECO:0007669"/>
    <property type="project" value="InterPro"/>
</dbReference>
<dbReference type="GO" id="GO:0000105">
    <property type="term" value="P:L-histidine biosynthetic process"/>
    <property type="evidence" value="ECO:0007669"/>
    <property type="project" value="UniProtKB-UniRule"/>
</dbReference>
<dbReference type="CDD" id="cd00609">
    <property type="entry name" value="AAT_like"/>
    <property type="match status" value="1"/>
</dbReference>
<dbReference type="Gene3D" id="3.90.1150.10">
    <property type="entry name" value="Aspartate Aminotransferase, domain 1"/>
    <property type="match status" value="1"/>
</dbReference>
<dbReference type="Gene3D" id="3.40.640.10">
    <property type="entry name" value="Type I PLP-dependent aspartate aminotransferase-like (Major domain)"/>
    <property type="match status" value="1"/>
</dbReference>
<dbReference type="HAMAP" id="MF_01023">
    <property type="entry name" value="HisC_aminotrans_2"/>
    <property type="match status" value="1"/>
</dbReference>
<dbReference type="InterPro" id="IPR001917">
    <property type="entry name" value="Aminotrans_II_pyridoxalP_BS"/>
</dbReference>
<dbReference type="InterPro" id="IPR004839">
    <property type="entry name" value="Aminotransferase_I/II_large"/>
</dbReference>
<dbReference type="InterPro" id="IPR005861">
    <property type="entry name" value="HisP_aminotrans"/>
</dbReference>
<dbReference type="InterPro" id="IPR050106">
    <property type="entry name" value="HistidinolP_aminotransfase"/>
</dbReference>
<dbReference type="InterPro" id="IPR015424">
    <property type="entry name" value="PyrdxlP-dep_Trfase"/>
</dbReference>
<dbReference type="InterPro" id="IPR015421">
    <property type="entry name" value="PyrdxlP-dep_Trfase_major"/>
</dbReference>
<dbReference type="InterPro" id="IPR015422">
    <property type="entry name" value="PyrdxlP-dep_Trfase_small"/>
</dbReference>
<dbReference type="NCBIfam" id="TIGR01141">
    <property type="entry name" value="hisC"/>
    <property type="match status" value="1"/>
</dbReference>
<dbReference type="PANTHER" id="PTHR43643:SF3">
    <property type="entry name" value="HISTIDINOL-PHOSPHATE AMINOTRANSFERASE"/>
    <property type="match status" value="1"/>
</dbReference>
<dbReference type="PANTHER" id="PTHR43643">
    <property type="entry name" value="HISTIDINOL-PHOSPHATE AMINOTRANSFERASE 2"/>
    <property type="match status" value="1"/>
</dbReference>
<dbReference type="Pfam" id="PF00155">
    <property type="entry name" value="Aminotran_1_2"/>
    <property type="match status" value="1"/>
</dbReference>
<dbReference type="SUPFAM" id="SSF53383">
    <property type="entry name" value="PLP-dependent transferases"/>
    <property type="match status" value="1"/>
</dbReference>
<dbReference type="PROSITE" id="PS00599">
    <property type="entry name" value="AA_TRANSFER_CLASS_2"/>
    <property type="match status" value="1"/>
</dbReference>
<accession>Q81SV5</accession>
<accession>Q6I134</accession>
<accession>Q6KUY8</accession>
<gene>
    <name type="primary">hisC1</name>
    <name type="synonym">hisC-1</name>
    <name type="ordered locus">BA_1539</name>
    <name type="ordered locus">GBAA_1539</name>
    <name type="ordered locus">BAS1428</name>
</gene>
<name>HIS81_BACAN</name>
<feature type="chain" id="PRO_0000153297" description="Histidinol-phosphate aminotransferase 1">
    <location>
        <begin position="1"/>
        <end position="370"/>
    </location>
</feature>
<feature type="modified residue" description="N6-(pyridoxal phosphate)lysine" evidence="1">
    <location>
        <position position="222"/>
    </location>
</feature>
<keyword id="KW-0028">Amino-acid biosynthesis</keyword>
<keyword id="KW-0032">Aminotransferase</keyword>
<keyword id="KW-0368">Histidine biosynthesis</keyword>
<keyword id="KW-0663">Pyridoxal phosphate</keyword>
<keyword id="KW-1185">Reference proteome</keyword>
<keyword id="KW-0808">Transferase</keyword>
<proteinExistence type="inferred from homology"/>
<organism>
    <name type="scientific">Bacillus anthracis</name>
    <dbReference type="NCBI Taxonomy" id="1392"/>
    <lineage>
        <taxon>Bacteria</taxon>
        <taxon>Bacillati</taxon>
        <taxon>Bacillota</taxon>
        <taxon>Bacilli</taxon>
        <taxon>Bacillales</taxon>
        <taxon>Bacillaceae</taxon>
        <taxon>Bacillus</taxon>
        <taxon>Bacillus cereus group</taxon>
    </lineage>
</organism>
<evidence type="ECO:0000250" key="1"/>
<evidence type="ECO:0000305" key="2"/>
<sequence>MRVKEQLLTLRAYVPGKNIEEVKREYGLSKIVKLASNENPFGCSARVTEALTSLASQYALYPDGHAFELRTQVAKHLGVKAEQLLFGSGLDEVIQMISRALLHEGTNVVMANPTFSQYHHHAVIEGAEVREVSLKDGIHDLDAMLQQVDDQTKIVWICNPNNPTGTYVEKQKLLSFLESVPKSALVIMDEAYYEYAGAEDYPQTLPLLEKYENLMVLRTFSKAYGLAAFRIGYAVGNTELIGQLEVARLPFNTSTVAQSVALAALEDQAFLQECVKKNEEGLHQYYAFCKEYNVFYYPSQTNFIFLKLGIPGNEAFERLMKKGYIVRSGAAFGIDDGIRITVGLKEENDEIIELLKELVNEQVQKEETYS</sequence>
<comment type="catalytic activity">
    <reaction>
        <text>L-histidinol phosphate + 2-oxoglutarate = 3-(imidazol-4-yl)-2-oxopropyl phosphate + L-glutamate</text>
        <dbReference type="Rhea" id="RHEA:23744"/>
        <dbReference type="ChEBI" id="CHEBI:16810"/>
        <dbReference type="ChEBI" id="CHEBI:29985"/>
        <dbReference type="ChEBI" id="CHEBI:57766"/>
        <dbReference type="ChEBI" id="CHEBI:57980"/>
        <dbReference type="EC" id="2.6.1.9"/>
    </reaction>
</comment>
<comment type="cofactor">
    <cofactor evidence="1">
        <name>pyridoxal 5'-phosphate</name>
        <dbReference type="ChEBI" id="CHEBI:597326"/>
    </cofactor>
</comment>
<comment type="pathway">
    <text>Amino-acid biosynthesis; L-histidine biosynthesis; L-histidine from 5-phospho-alpha-D-ribose 1-diphosphate: step 7/9.</text>
</comment>
<comment type="subunit">
    <text evidence="1">Homodimer.</text>
</comment>
<comment type="similarity">
    <text evidence="2">Belongs to the class-II pyridoxal-phosphate-dependent aminotransferase family. Histidinol-phosphate aminotransferase subfamily.</text>
</comment>
<protein>
    <recommendedName>
        <fullName>Histidinol-phosphate aminotransferase 1</fullName>
        <ecNumber>2.6.1.9</ecNumber>
    </recommendedName>
    <alternativeName>
        <fullName>Imidazole acetol-phosphate transaminase 1</fullName>
    </alternativeName>
</protein>